<name>FOLD_PYRNV</name>
<comment type="function">
    <text evidence="1">Catalyzes the oxidation of 5,10-methylenetetrahydrofolate to 5,10-methenyltetrahydrofolate and then the hydrolysis of 5,10-methenyltetrahydrofolate to 10-formyltetrahydrofolate.</text>
</comment>
<comment type="catalytic activity">
    <reaction evidence="1">
        <text>(6R)-5,10-methylene-5,6,7,8-tetrahydrofolate + NADP(+) = (6R)-5,10-methenyltetrahydrofolate + NADPH</text>
        <dbReference type="Rhea" id="RHEA:22812"/>
        <dbReference type="ChEBI" id="CHEBI:15636"/>
        <dbReference type="ChEBI" id="CHEBI:57455"/>
        <dbReference type="ChEBI" id="CHEBI:57783"/>
        <dbReference type="ChEBI" id="CHEBI:58349"/>
        <dbReference type="EC" id="1.5.1.5"/>
    </reaction>
</comment>
<comment type="catalytic activity">
    <reaction evidence="1">
        <text>(6R)-5,10-methenyltetrahydrofolate + H2O = (6R)-10-formyltetrahydrofolate + H(+)</text>
        <dbReference type="Rhea" id="RHEA:23700"/>
        <dbReference type="ChEBI" id="CHEBI:15377"/>
        <dbReference type="ChEBI" id="CHEBI:15378"/>
        <dbReference type="ChEBI" id="CHEBI:57455"/>
        <dbReference type="ChEBI" id="CHEBI:195366"/>
        <dbReference type="EC" id="3.5.4.9"/>
    </reaction>
</comment>
<comment type="pathway">
    <text evidence="1">One-carbon metabolism; tetrahydrofolate interconversion.</text>
</comment>
<comment type="subunit">
    <text evidence="1">Homodimer.</text>
</comment>
<comment type="similarity">
    <text evidence="1">Belongs to the tetrahydrofolate dehydrogenase/cyclohydrolase family.</text>
</comment>
<gene>
    <name evidence="1" type="primary">folD</name>
    <name type="ordered locus">Tneu_1909</name>
</gene>
<organism>
    <name type="scientific">Pyrobaculum neutrophilum (strain DSM 2338 / JCM 9278 / NBRC 100436 / V24Sta)</name>
    <name type="common">Thermoproteus neutrophilus</name>
    <dbReference type="NCBI Taxonomy" id="444157"/>
    <lineage>
        <taxon>Archaea</taxon>
        <taxon>Thermoproteota</taxon>
        <taxon>Thermoprotei</taxon>
        <taxon>Thermoproteales</taxon>
        <taxon>Thermoproteaceae</taxon>
        <taxon>Pyrobaculum</taxon>
    </lineage>
</organism>
<feature type="chain" id="PRO_1000147532" description="Bifunctional protein FolD">
    <location>
        <begin position="1"/>
        <end position="311"/>
    </location>
</feature>
<feature type="binding site" evidence="1">
    <location>
        <begin position="174"/>
        <end position="176"/>
    </location>
    <ligand>
        <name>NADP(+)</name>
        <dbReference type="ChEBI" id="CHEBI:58349"/>
    </ligand>
</feature>
<reference key="1">
    <citation type="submission" date="2008-03" db="EMBL/GenBank/DDBJ databases">
        <title>Complete sequence of Thermoproteus neutrophilus V24Sta.</title>
        <authorList>
            <consortium name="US DOE Joint Genome Institute"/>
            <person name="Copeland A."/>
            <person name="Lucas S."/>
            <person name="Lapidus A."/>
            <person name="Glavina del Rio T."/>
            <person name="Dalin E."/>
            <person name="Tice H."/>
            <person name="Bruce D."/>
            <person name="Goodwin L."/>
            <person name="Pitluck S."/>
            <person name="Sims D."/>
            <person name="Brettin T."/>
            <person name="Detter J.C."/>
            <person name="Han C."/>
            <person name="Kuske C.R."/>
            <person name="Schmutz J."/>
            <person name="Larimer F."/>
            <person name="Land M."/>
            <person name="Hauser L."/>
            <person name="Kyrpides N."/>
            <person name="Mikhailova N."/>
            <person name="Biddle J.F."/>
            <person name="Zhang Z."/>
            <person name="Fitz-Gibbon S.T."/>
            <person name="Lowe T.M."/>
            <person name="Saltikov C."/>
            <person name="House C.H."/>
            <person name="Richardson P."/>
        </authorList>
    </citation>
    <scope>NUCLEOTIDE SEQUENCE [LARGE SCALE GENOMIC DNA]</scope>
    <source>
        <strain>DSM 2338 / JCM 9278 / NBRC 100436 / V24Sta</strain>
    </source>
</reference>
<evidence type="ECO:0000255" key="1">
    <source>
        <dbReference type="HAMAP-Rule" id="MF_01576"/>
    </source>
</evidence>
<keyword id="KW-0028">Amino-acid biosynthesis</keyword>
<keyword id="KW-0368">Histidine biosynthesis</keyword>
<keyword id="KW-0378">Hydrolase</keyword>
<keyword id="KW-0486">Methionine biosynthesis</keyword>
<keyword id="KW-0511">Multifunctional enzyme</keyword>
<keyword id="KW-0521">NADP</keyword>
<keyword id="KW-0554">One-carbon metabolism</keyword>
<keyword id="KW-0560">Oxidoreductase</keyword>
<keyword id="KW-0658">Purine biosynthesis</keyword>
<dbReference type="EC" id="1.5.1.5" evidence="1"/>
<dbReference type="EC" id="3.5.4.9" evidence="1"/>
<dbReference type="EMBL" id="CP001014">
    <property type="protein sequence ID" value="ACB40824.1"/>
    <property type="molecule type" value="Genomic_DNA"/>
</dbReference>
<dbReference type="RefSeq" id="WP_012351243.1">
    <property type="nucleotide sequence ID" value="NC_010525.1"/>
</dbReference>
<dbReference type="SMR" id="B1YBM2"/>
<dbReference type="STRING" id="444157.Tneu_1909"/>
<dbReference type="GeneID" id="6164915"/>
<dbReference type="KEGG" id="tne:Tneu_1909"/>
<dbReference type="eggNOG" id="arCOG04538">
    <property type="taxonomic scope" value="Archaea"/>
</dbReference>
<dbReference type="HOGENOM" id="CLU_034045_2_1_2"/>
<dbReference type="OrthoDB" id="9455at2157"/>
<dbReference type="UniPathway" id="UPA00193"/>
<dbReference type="Proteomes" id="UP000001694">
    <property type="component" value="Chromosome"/>
</dbReference>
<dbReference type="GO" id="GO:0005829">
    <property type="term" value="C:cytosol"/>
    <property type="evidence" value="ECO:0007669"/>
    <property type="project" value="TreeGrafter"/>
</dbReference>
<dbReference type="GO" id="GO:0004477">
    <property type="term" value="F:methenyltetrahydrofolate cyclohydrolase activity"/>
    <property type="evidence" value="ECO:0007669"/>
    <property type="project" value="UniProtKB-UniRule"/>
</dbReference>
<dbReference type="GO" id="GO:0004488">
    <property type="term" value="F:methylenetetrahydrofolate dehydrogenase (NADP+) activity"/>
    <property type="evidence" value="ECO:0007669"/>
    <property type="project" value="UniProtKB-UniRule"/>
</dbReference>
<dbReference type="GO" id="GO:0000105">
    <property type="term" value="P:L-histidine biosynthetic process"/>
    <property type="evidence" value="ECO:0007669"/>
    <property type="project" value="UniProtKB-KW"/>
</dbReference>
<dbReference type="GO" id="GO:0009086">
    <property type="term" value="P:methionine biosynthetic process"/>
    <property type="evidence" value="ECO:0007669"/>
    <property type="project" value="UniProtKB-KW"/>
</dbReference>
<dbReference type="GO" id="GO:0006164">
    <property type="term" value="P:purine nucleotide biosynthetic process"/>
    <property type="evidence" value="ECO:0007669"/>
    <property type="project" value="UniProtKB-KW"/>
</dbReference>
<dbReference type="GO" id="GO:0035999">
    <property type="term" value="P:tetrahydrofolate interconversion"/>
    <property type="evidence" value="ECO:0007669"/>
    <property type="project" value="UniProtKB-UniRule"/>
</dbReference>
<dbReference type="Gene3D" id="3.40.50.10860">
    <property type="entry name" value="Leucine Dehydrogenase, chain A, domain 1"/>
    <property type="match status" value="1"/>
</dbReference>
<dbReference type="Gene3D" id="3.40.50.720">
    <property type="entry name" value="NAD(P)-binding Rossmann-like Domain"/>
    <property type="match status" value="1"/>
</dbReference>
<dbReference type="HAMAP" id="MF_01576">
    <property type="entry name" value="THF_DHG_CYH"/>
    <property type="match status" value="1"/>
</dbReference>
<dbReference type="InterPro" id="IPR046346">
    <property type="entry name" value="Aminoacid_DH-like_N_sf"/>
</dbReference>
<dbReference type="InterPro" id="IPR036291">
    <property type="entry name" value="NAD(P)-bd_dom_sf"/>
</dbReference>
<dbReference type="InterPro" id="IPR000672">
    <property type="entry name" value="THF_DH/CycHdrlase"/>
</dbReference>
<dbReference type="InterPro" id="IPR020630">
    <property type="entry name" value="THF_DH/CycHdrlase_cat_dom"/>
</dbReference>
<dbReference type="InterPro" id="IPR020631">
    <property type="entry name" value="THF_DH/CycHdrlase_NAD-bd_dom"/>
</dbReference>
<dbReference type="PANTHER" id="PTHR48099:SF5">
    <property type="entry name" value="C-1-TETRAHYDROFOLATE SYNTHASE, CYTOPLASMIC"/>
    <property type="match status" value="1"/>
</dbReference>
<dbReference type="PANTHER" id="PTHR48099">
    <property type="entry name" value="C-1-TETRAHYDROFOLATE SYNTHASE, CYTOPLASMIC-RELATED"/>
    <property type="match status" value="1"/>
</dbReference>
<dbReference type="Pfam" id="PF00763">
    <property type="entry name" value="THF_DHG_CYH"/>
    <property type="match status" value="1"/>
</dbReference>
<dbReference type="Pfam" id="PF02882">
    <property type="entry name" value="THF_DHG_CYH_C"/>
    <property type="match status" value="1"/>
</dbReference>
<dbReference type="PRINTS" id="PR00085">
    <property type="entry name" value="THFDHDRGNASE"/>
</dbReference>
<dbReference type="SUPFAM" id="SSF53223">
    <property type="entry name" value="Aminoacid dehydrogenase-like, N-terminal domain"/>
    <property type="match status" value="1"/>
</dbReference>
<dbReference type="SUPFAM" id="SSF51735">
    <property type="entry name" value="NAD(P)-binding Rossmann-fold domains"/>
    <property type="match status" value="1"/>
</dbReference>
<proteinExistence type="inferred from homology"/>
<accession>B1YBM2</accession>
<protein>
    <recommendedName>
        <fullName evidence="1">Bifunctional protein FolD</fullName>
    </recommendedName>
    <domain>
        <recommendedName>
            <fullName evidence="1">Methylenetetrahydrofolate dehydrogenase</fullName>
            <ecNumber evidence="1">1.5.1.5</ecNumber>
        </recommendedName>
    </domain>
    <domain>
        <recommendedName>
            <fullName evidence="1">Methenyltetrahydrofolate cyclohydrolase</fullName>
            <ecNumber evidence="1">3.5.4.9</ecNumber>
        </recommendedName>
    </domain>
</protein>
<sequence>MVVWIRGDRLHAETLQWARRHVEELERFGVTPKLAVLLLNDDPVELETQRRYVSLKAKDVRSIGGEVEIYELYKEPPERREAAALRLIERLNNADDVTGVLIQKPLPPYIDEGRLFERLSPIKDVDGLTPENKKRLVAGFDLDRDILPCTPAGILELFRQYQVEVRGRDVVVVGKGTLVGFPLSIMLMQMDATVTTLHALSKDRAYYTRKADIVISAVGRPPELYGDNPWRLTGDMIKEGAVVVGVGGKVDPATKRWYFDVDENSVAEKASYLTPNIGGVGLATRARLVKNLIITTYMVLTRVTSPRLLSL</sequence>